<reference key="1">
    <citation type="submission" date="2004-11" db="EMBL/GenBank/DDBJ databases">
        <authorList>
            <consortium name="The German cDNA consortium"/>
        </authorList>
    </citation>
    <scope>NUCLEOTIDE SEQUENCE [LARGE SCALE MRNA]</scope>
    <source>
        <tissue>Brain cortex</tissue>
    </source>
</reference>
<evidence type="ECO:0000250" key="1">
    <source>
        <dbReference type="UniProtKB" id="P13987"/>
    </source>
</evidence>
<evidence type="ECO:0000255" key="2"/>
<sequence length="128" mass="14020">MGIQGGSVLFGLLLILAVFCHSGHSLQCYSCPNPTADCKTAVNCSSGFDACLITKAGLRVYNQCWKFEHCTFNEVTTRLKESELTYHCCKKDLCNINEQLENGGTSLSEKTVLLLVTPFLAAAWSLHP</sequence>
<proteinExistence type="evidence at transcript level"/>
<feature type="signal peptide" evidence="1">
    <location>
        <begin position="1"/>
        <end position="25"/>
    </location>
</feature>
<feature type="chain" id="PRO_0000036120" description="CD59 glycoprotein">
    <location>
        <begin position="26"/>
        <end position="102"/>
    </location>
</feature>
<feature type="propeptide" id="PRO_0000036121" description="Removed in mature form" evidence="1">
    <location>
        <begin position="103"/>
        <end position="128"/>
    </location>
</feature>
<feature type="domain" description="UPAR/Ly6">
    <location>
        <begin position="26"/>
        <end position="108"/>
    </location>
</feature>
<feature type="lipid moiety-binding region" description="GPI-anchor amidated asparagine" evidence="1">
    <location>
        <position position="102"/>
    </location>
</feature>
<feature type="glycosylation site" description="N-linked (GlcNAc...) asparagine" evidence="2">
    <location>
        <position position="43"/>
    </location>
</feature>
<feature type="disulfide bond" evidence="1">
    <location>
        <begin position="28"/>
        <end position="51"/>
    </location>
</feature>
<feature type="disulfide bond" evidence="1">
    <location>
        <begin position="31"/>
        <end position="38"/>
    </location>
</feature>
<feature type="disulfide bond" evidence="1">
    <location>
        <begin position="44"/>
        <end position="64"/>
    </location>
</feature>
<feature type="disulfide bond" evidence="1">
    <location>
        <begin position="70"/>
        <end position="88"/>
    </location>
</feature>
<feature type="disulfide bond" evidence="1">
    <location>
        <begin position="89"/>
        <end position="94"/>
    </location>
</feature>
<keyword id="KW-1003">Cell membrane</keyword>
<keyword id="KW-1015">Disulfide bond</keyword>
<keyword id="KW-0325">Glycoprotein</keyword>
<keyword id="KW-0336">GPI-anchor</keyword>
<keyword id="KW-0449">Lipoprotein</keyword>
<keyword id="KW-0472">Membrane</keyword>
<keyword id="KW-1185">Reference proteome</keyword>
<keyword id="KW-0964">Secreted</keyword>
<keyword id="KW-0732">Signal</keyword>
<dbReference type="EMBL" id="CR861075">
    <property type="protein sequence ID" value="CAH93156.1"/>
    <property type="molecule type" value="mRNA"/>
</dbReference>
<dbReference type="RefSeq" id="NP_001126861.1">
    <property type="nucleotide sequence ID" value="NM_001133389.1"/>
</dbReference>
<dbReference type="SMR" id="Q5R510"/>
<dbReference type="FunCoup" id="Q5R510">
    <property type="interactions" value="783"/>
</dbReference>
<dbReference type="STRING" id="9601.ENSPPYP00000003871"/>
<dbReference type="GlyCosmos" id="Q5R510">
    <property type="glycosylation" value="1 site, No reported glycans"/>
</dbReference>
<dbReference type="Ensembl" id="ENSPPYT00000004019.3">
    <property type="protein sequence ID" value="ENSPPYP00000003871.2"/>
    <property type="gene ID" value="ENSPPYG00000003370.3"/>
</dbReference>
<dbReference type="GeneID" id="100173870"/>
<dbReference type="KEGG" id="pon:100173870"/>
<dbReference type="CTD" id="966"/>
<dbReference type="eggNOG" id="ENOG502SA4P">
    <property type="taxonomic scope" value="Eukaryota"/>
</dbReference>
<dbReference type="GeneTree" id="ENSGT00390000016309"/>
<dbReference type="HOGENOM" id="CLU_147732_1_0_1"/>
<dbReference type="InParanoid" id="Q5R510"/>
<dbReference type="OMA" id="CEYSRLA"/>
<dbReference type="OrthoDB" id="10011411at2759"/>
<dbReference type="TreeFam" id="TF338524"/>
<dbReference type="Proteomes" id="UP000001595">
    <property type="component" value="Chromosome 11"/>
</dbReference>
<dbReference type="GO" id="GO:0009897">
    <property type="term" value="C:external side of plasma membrane"/>
    <property type="evidence" value="ECO:0007669"/>
    <property type="project" value="Ensembl"/>
</dbReference>
<dbReference type="GO" id="GO:0001848">
    <property type="term" value="F:complement binding"/>
    <property type="evidence" value="ECO:0007669"/>
    <property type="project" value="TreeGrafter"/>
</dbReference>
<dbReference type="GO" id="GO:0001971">
    <property type="term" value="P:negative regulation of activation of membrane attack complex"/>
    <property type="evidence" value="ECO:0007669"/>
    <property type="project" value="TreeGrafter"/>
</dbReference>
<dbReference type="GO" id="GO:1903659">
    <property type="term" value="P:regulation of complement-dependent cytotoxicity"/>
    <property type="evidence" value="ECO:0007669"/>
    <property type="project" value="Ensembl"/>
</dbReference>
<dbReference type="CDD" id="cd23554">
    <property type="entry name" value="TFP_LU_ECD_CD59"/>
    <property type="match status" value="1"/>
</dbReference>
<dbReference type="FunFam" id="2.10.60.10:FF:000023">
    <property type="entry name" value="CD59 glycoprotein preproprotein"/>
    <property type="match status" value="1"/>
</dbReference>
<dbReference type="Gene3D" id="2.10.60.10">
    <property type="entry name" value="CD59"/>
    <property type="match status" value="1"/>
</dbReference>
<dbReference type="InterPro" id="IPR056949">
    <property type="entry name" value="CD59"/>
</dbReference>
<dbReference type="InterPro" id="IPR018363">
    <property type="entry name" value="CD59_antigen_CS"/>
</dbReference>
<dbReference type="InterPro" id="IPR016054">
    <property type="entry name" value="LY6_UPA_recep-like"/>
</dbReference>
<dbReference type="InterPro" id="IPR045860">
    <property type="entry name" value="Snake_toxin-like_sf"/>
</dbReference>
<dbReference type="PANTHER" id="PTHR10036">
    <property type="entry name" value="CD59 GLYCOPROTEIN"/>
    <property type="match status" value="1"/>
</dbReference>
<dbReference type="PANTHER" id="PTHR10036:SF24">
    <property type="entry name" value="CD59 GLYCOPROTEIN"/>
    <property type="match status" value="1"/>
</dbReference>
<dbReference type="Pfam" id="PF25152">
    <property type="entry name" value="CD59"/>
    <property type="match status" value="1"/>
</dbReference>
<dbReference type="SMART" id="SM00134">
    <property type="entry name" value="LU"/>
    <property type="match status" value="1"/>
</dbReference>
<dbReference type="SUPFAM" id="SSF57302">
    <property type="entry name" value="Snake toxin-like"/>
    <property type="match status" value="1"/>
</dbReference>
<dbReference type="PROSITE" id="PS00983">
    <property type="entry name" value="LY6_UPAR"/>
    <property type="match status" value="1"/>
</dbReference>
<comment type="function">
    <text evidence="1">Potent inhibitor of the complement membrane attack complex (MAC) action, which protects self-cells from damage during complement activation. Acts by binding to the beta-haipins of C8 (C8A and C8B) components of the assembling MAC, forming an intermolecular beta-sheet that prevents incorporation of the multiple copies of C9 required for complete formation of the osmolytic pore.</text>
</comment>
<comment type="subunit">
    <text evidence="1">Interacts with T-cell surface antigen CD2.</text>
</comment>
<comment type="subcellular location">
    <subcellularLocation>
        <location evidence="1">Cell membrane</location>
        <topology evidence="1">Lipid-anchor</topology>
        <topology evidence="1">GPI-anchor</topology>
    </subcellularLocation>
    <subcellularLocation>
        <location evidence="1">Secreted</location>
    </subcellularLocation>
    <text evidence="1">Localizes to the cell surface. Soluble form found in a number of tissues.</text>
</comment>
<comment type="PTM">
    <text evidence="1">N- and O-glycosylated.</text>
</comment>
<accession>Q5R510</accession>
<gene>
    <name type="primary">CD59</name>
</gene>
<protein>
    <recommendedName>
        <fullName>CD59 glycoprotein</fullName>
    </recommendedName>
    <alternativeName>
        <fullName>MAC-inhibitory protein</fullName>
        <shortName>MAC-IP</shortName>
    </alternativeName>
    <alternativeName>
        <fullName>Membrane attack complex inhibition factor</fullName>
        <shortName>MACIF</shortName>
    </alternativeName>
    <alternativeName>
        <fullName>Protectin</fullName>
    </alternativeName>
    <cdAntigenName>CD59</cdAntigenName>
</protein>
<name>CD59_PONAB</name>
<organism>
    <name type="scientific">Pongo abelii</name>
    <name type="common">Sumatran orangutan</name>
    <name type="synonym">Pongo pygmaeus abelii</name>
    <dbReference type="NCBI Taxonomy" id="9601"/>
    <lineage>
        <taxon>Eukaryota</taxon>
        <taxon>Metazoa</taxon>
        <taxon>Chordata</taxon>
        <taxon>Craniata</taxon>
        <taxon>Vertebrata</taxon>
        <taxon>Euteleostomi</taxon>
        <taxon>Mammalia</taxon>
        <taxon>Eutheria</taxon>
        <taxon>Euarchontoglires</taxon>
        <taxon>Primates</taxon>
        <taxon>Haplorrhini</taxon>
        <taxon>Catarrhini</taxon>
        <taxon>Hominidae</taxon>
        <taxon>Pongo</taxon>
    </lineage>
</organism>